<proteinExistence type="inferred from homology"/>
<keyword id="KW-0963">Cytoplasm</keyword>
<keyword id="KW-0324">Glycolysis</keyword>
<keyword id="KW-0520">NAD</keyword>
<keyword id="KW-0547">Nucleotide-binding</keyword>
<keyword id="KW-0560">Oxidoreductase</keyword>
<evidence type="ECO:0000250" key="1">
    <source>
        <dbReference type="UniProtKB" id="P00362"/>
    </source>
</evidence>
<evidence type="ECO:0000250" key="2">
    <source>
        <dbReference type="UniProtKB" id="Q6GIL8"/>
    </source>
</evidence>
<evidence type="ECO:0000305" key="3"/>
<name>G3P1_STAAW</name>
<comment type="function">
    <text evidence="2">Catalyzes the oxidative phosphorylation of glyceraldehyde 3-phosphate (G3P) to 1,3-bisphosphoglycerate (BPG) using the cofactor NAD. The first reaction step involves the formation of a hemiacetal intermediate between G3P and a cysteine residue, and this hemiacetal intermediate is then oxidized to a thioester, with concomitant reduction of NAD to NADH. The reduced NADH is then exchanged with the second NAD, and the thioester is attacked by a nucleophilic inorganic phosphate to produce BPG.</text>
</comment>
<comment type="catalytic activity">
    <reaction evidence="2">
        <text>D-glyceraldehyde 3-phosphate + phosphate + NAD(+) = (2R)-3-phospho-glyceroyl phosphate + NADH + H(+)</text>
        <dbReference type="Rhea" id="RHEA:10300"/>
        <dbReference type="ChEBI" id="CHEBI:15378"/>
        <dbReference type="ChEBI" id="CHEBI:43474"/>
        <dbReference type="ChEBI" id="CHEBI:57540"/>
        <dbReference type="ChEBI" id="CHEBI:57604"/>
        <dbReference type="ChEBI" id="CHEBI:57945"/>
        <dbReference type="ChEBI" id="CHEBI:59776"/>
        <dbReference type="EC" id="1.2.1.12"/>
    </reaction>
</comment>
<comment type="pathway">
    <text evidence="3">Carbohydrate degradation; glycolysis; pyruvate from D-glyceraldehyde 3-phosphate: step 1/5.</text>
</comment>
<comment type="subunit">
    <text evidence="2">Homotetramer.</text>
</comment>
<comment type="subcellular location">
    <subcellularLocation>
        <location evidence="3">Cytoplasm</location>
    </subcellularLocation>
</comment>
<comment type="similarity">
    <text evidence="3">Belongs to the glyceraldehyde-3-phosphate dehydrogenase family.</text>
</comment>
<gene>
    <name type="primary">gapA1</name>
    <name type="synonym">gap</name>
    <name type="synonym">gapA</name>
    <name type="ordered locus">MW0734</name>
</gene>
<organism>
    <name type="scientific">Staphylococcus aureus (strain MW2)</name>
    <dbReference type="NCBI Taxonomy" id="196620"/>
    <lineage>
        <taxon>Bacteria</taxon>
        <taxon>Bacillati</taxon>
        <taxon>Bacillota</taxon>
        <taxon>Bacilli</taxon>
        <taxon>Bacillales</taxon>
        <taxon>Staphylococcaceae</taxon>
        <taxon>Staphylococcus</taxon>
    </lineage>
</organism>
<feature type="chain" id="PRO_0000145687" description="Glyceraldehyde-3-phosphate dehydrogenase 1">
    <location>
        <begin position="1"/>
        <end position="336"/>
    </location>
</feature>
<feature type="active site" description="Nucleophile" evidence="2">
    <location>
        <position position="151"/>
    </location>
</feature>
<feature type="binding site" evidence="2">
    <location>
        <begin position="12"/>
        <end position="13"/>
    </location>
    <ligand>
        <name>NAD(+)</name>
        <dbReference type="ChEBI" id="CHEBI:57540"/>
    </ligand>
</feature>
<feature type="binding site" evidence="2">
    <location>
        <position position="34"/>
    </location>
    <ligand>
        <name>NAD(+)</name>
        <dbReference type="ChEBI" id="CHEBI:57540"/>
    </ligand>
</feature>
<feature type="binding site" evidence="2">
    <location>
        <position position="120"/>
    </location>
    <ligand>
        <name>NAD(+)</name>
        <dbReference type="ChEBI" id="CHEBI:57540"/>
    </ligand>
</feature>
<feature type="binding site" evidence="2">
    <location>
        <begin position="150"/>
        <end position="152"/>
    </location>
    <ligand>
        <name>D-glyceraldehyde 3-phosphate</name>
        <dbReference type="ChEBI" id="CHEBI:59776"/>
    </ligand>
</feature>
<feature type="binding site" evidence="2">
    <location>
        <position position="181"/>
    </location>
    <ligand>
        <name>D-glyceraldehyde 3-phosphate</name>
        <dbReference type="ChEBI" id="CHEBI:59776"/>
    </ligand>
</feature>
<feature type="binding site" evidence="1">
    <location>
        <position position="198"/>
    </location>
    <ligand>
        <name>D-glyceraldehyde 3-phosphate</name>
        <dbReference type="ChEBI" id="CHEBI:59776"/>
    </ligand>
</feature>
<feature type="binding site" evidence="2">
    <location>
        <begin position="211"/>
        <end position="212"/>
    </location>
    <ligand>
        <name>D-glyceraldehyde 3-phosphate</name>
        <dbReference type="ChEBI" id="CHEBI:59776"/>
    </ligand>
</feature>
<feature type="binding site" evidence="2">
    <location>
        <position position="234"/>
    </location>
    <ligand>
        <name>D-glyceraldehyde 3-phosphate</name>
        <dbReference type="ChEBI" id="CHEBI:59776"/>
    </ligand>
</feature>
<feature type="binding site" evidence="2">
    <location>
        <position position="316"/>
    </location>
    <ligand>
        <name>NAD(+)</name>
        <dbReference type="ChEBI" id="CHEBI:57540"/>
    </ligand>
</feature>
<feature type="site" description="Activates thiol group during catalysis" evidence="2">
    <location>
        <position position="178"/>
    </location>
</feature>
<protein>
    <recommendedName>
        <fullName evidence="2">Glyceraldehyde-3-phosphate dehydrogenase 1</fullName>
        <shortName evidence="2">GAPDH 1</shortName>
        <ecNumber evidence="2">1.2.1.12</ecNumber>
    </recommendedName>
    <alternativeName>
        <fullName evidence="2">NAD-dependent glyceraldehyde-3-phosphate dehydrogenase</fullName>
    </alternativeName>
</protein>
<dbReference type="EC" id="1.2.1.12" evidence="2"/>
<dbReference type="EMBL" id="BA000033">
    <property type="protein sequence ID" value="BAB94599.1"/>
    <property type="molecule type" value="Genomic_DNA"/>
</dbReference>
<dbReference type="RefSeq" id="WP_000279414.1">
    <property type="nucleotide sequence ID" value="NC_003923.1"/>
</dbReference>
<dbReference type="SMR" id="P0A037"/>
<dbReference type="KEGG" id="sam:MW0734"/>
<dbReference type="HOGENOM" id="CLU_030140_0_0_9"/>
<dbReference type="UniPathway" id="UPA00109">
    <property type="reaction ID" value="UER00184"/>
</dbReference>
<dbReference type="GO" id="GO:0005737">
    <property type="term" value="C:cytoplasm"/>
    <property type="evidence" value="ECO:0007669"/>
    <property type="project" value="UniProtKB-SubCell"/>
</dbReference>
<dbReference type="GO" id="GO:0004365">
    <property type="term" value="F:glyceraldehyde-3-phosphate dehydrogenase (NAD+) (phosphorylating) activity"/>
    <property type="evidence" value="ECO:0000250"/>
    <property type="project" value="UniProtKB"/>
</dbReference>
<dbReference type="GO" id="GO:0051287">
    <property type="term" value="F:NAD binding"/>
    <property type="evidence" value="ECO:0000250"/>
    <property type="project" value="UniProtKB"/>
</dbReference>
<dbReference type="GO" id="GO:0050661">
    <property type="term" value="F:NADP binding"/>
    <property type="evidence" value="ECO:0007669"/>
    <property type="project" value="InterPro"/>
</dbReference>
<dbReference type="GO" id="GO:0006006">
    <property type="term" value="P:glucose metabolic process"/>
    <property type="evidence" value="ECO:0007669"/>
    <property type="project" value="InterPro"/>
</dbReference>
<dbReference type="GO" id="GO:0006096">
    <property type="term" value="P:glycolytic process"/>
    <property type="evidence" value="ECO:0007669"/>
    <property type="project" value="UniProtKB-UniPathway"/>
</dbReference>
<dbReference type="CDD" id="cd18126">
    <property type="entry name" value="GAPDH_I_C"/>
    <property type="match status" value="1"/>
</dbReference>
<dbReference type="CDD" id="cd05214">
    <property type="entry name" value="GAPDH_I_N"/>
    <property type="match status" value="1"/>
</dbReference>
<dbReference type="FunFam" id="3.30.360.10:FF:000002">
    <property type="entry name" value="Glyceraldehyde-3-phosphate dehydrogenase"/>
    <property type="match status" value="1"/>
</dbReference>
<dbReference type="FunFam" id="3.40.50.720:FF:000001">
    <property type="entry name" value="Glyceraldehyde-3-phosphate dehydrogenase"/>
    <property type="match status" value="1"/>
</dbReference>
<dbReference type="Gene3D" id="3.30.360.10">
    <property type="entry name" value="Dihydrodipicolinate Reductase, domain 2"/>
    <property type="match status" value="1"/>
</dbReference>
<dbReference type="Gene3D" id="3.40.50.720">
    <property type="entry name" value="NAD(P)-binding Rossmann-like Domain"/>
    <property type="match status" value="1"/>
</dbReference>
<dbReference type="InterPro" id="IPR020831">
    <property type="entry name" value="GlycerAld/Erythrose_P_DH"/>
</dbReference>
<dbReference type="InterPro" id="IPR020830">
    <property type="entry name" value="GlycerAld_3-P_DH_AS"/>
</dbReference>
<dbReference type="InterPro" id="IPR020829">
    <property type="entry name" value="GlycerAld_3-P_DH_cat"/>
</dbReference>
<dbReference type="InterPro" id="IPR020828">
    <property type="entry name" value="GlycerAld_3-P_DH_NAD(P)-bd"/>
</dbReference>
<dbReference type="InterPro" id="IPR006424">
    <property type="entry name" value="Glyceraldehyde-3-P_DH_1"/>
</dbReference>
<dbReference type="InterPro" id="IPR036291">
    <property type="entry name" value="NAD(P)-bd_dom_sf"/>
</dbReference>
<dbReference type="NCBIfam" id="TIGR01534">
    <property type="entry name" value="GAPDH-I"/>
    <property type="match status" value="1"/>
</dbReference>
<dbReference type="PANTHER" id="PTHR43148">
    <property type="entry name" value="GLYCERALDEHYDE-3-PHOSPHATE DEHYDROGENASE 2"/>
    <property type="match status" value="1"/>
</dbReference>
<dbReference type="Pfam" id="PF02800">
    <property type="entry name" value="Gp_dh_C"/>
    <property type="match status" value="1"/>
</dbReference>
<dbReference type="Pfam" id="PF00044">
    <property type="entry name" value="Gp_dh_N"/>
    <property type="match status" value="1"/>
</dbReference>
<dbReference type="PIRSF" id="PIRSF000149">
    <property type="entry name" value="GAP_DH"/>
    <property type="match status" value="1"/>
</dbReference>
<dbReference type="PRINTS" id="PR00078">
    <property type="entry name" value="G3PDHDRGNASE"/>
</dbReference>
<dbReference type="SMART" id="SM00846">
    <property type="entry name" value="Gp_dh_N"/>
    <property type="match status" value="1"/>
</dbReference>
<dbReference type="SUPFAM" id="SSF55347">
    <property type="entry name" value="Glyceraldehyde-3-phosphate dehydrogenase-like, C-terminal domain"/>
    <property type="match status" value="1"/>
</dbReference>
<dbReference type="SUPFAM" id="SSF51735">
    <property type="entry name" value="NAD(P)-binding Rossmann-fold domains"/>
    <property type="match status" value="1"/>
</dbReference>
<dbReference type="PROSITE" id="PS00071">
    <property type="entry name" value="GAPDH"/>
    <property type="match status" value="1"/>
</dbReference>
<sequence length="336" mass="36281">MAVKVAINGFGRIGRLAFRRIQEVEGLEVVAVNDLTDDDMLAHLLKYDTMQGRFTGEVEVVDGGFRVNGKEVKSFSEPDASKLPWKDLNIDVVLECTGFYTDKDKAQAHIEAGAKKVLISAPATGDLKTIVFNTNHQELDGSETVVSGASCTTNSLAPVAKVLNDDFGLVEGLMTTIHAYTGDQNTQDAPHRKGDKRRARAAAENIIPNSTGAAKAIGKVIPEIDGKLDGGAQRVPVATGSLTELTVVLEKQDVTVEQVNEAMKNASNESFGYTEDEIVSSDVVGMTYGSLFDATQTRVMSVGDRQLVKVAAWYDNEMSYTAQLVRTLAYLAELSK</sequence>
<accession>P0A037</accession>
<accession>Q9Z5C5</accession>
<reference key="1">
    <citation type="journal article" date="2002" name="Lancet">
        <title>Genome and virulence determinants of high virulence community-acquired MRSA.</title>
        <authorList>
            <person name="Baba T."/>
            <person name="Takeuchi F."/>
            <person name="Kuroda M."/>
            <person name="Yuzawa H."/>
            <person name="Aoki K."/>
            <person name="Oguchi A."/>
            <person name="Nagai Y."/>
            <person name="Iwama N."/>
            <person name="Asano K."/>
            <person name="Naimi T."/>
            <person name="Kuroda H."/>
            <person name="Cui L."/>
            <person name="Yamamoto K."/>
            <person name="Hiramatsu K."/>
        </authorList>
    </citation>
    <scope>NUCLEOTIDE SEQUENCE [LARGE SCALE GENOMIC DNA]</scope>
    <source>
        <strain>MW2</strain>
    </source>
</reference>